<accession>A1BFN2</accession>
<dbReference type="EMBL" id="CP000492">
    <property type="protein sequence ID" value="ABL65209.1"/>
    <property type="molecule type" value="Genomic_DNA"/>
</dbReference>
<dbReference type="RefSeq" id="WP_011745033.1">
    <property type="nucleotide sequence ID" value="NC_008639.1"/>
</dbReference>
<dbReference type="SMR" id="A1BFN2"/>
<dbReference type="STRING" id="290317.Cpha266_1172"/>
<dbReference type="KEGG" id="cph:Cpha266_1172"/>
<dbReference type="eggNOG" id="COG0353">
    <property type="taxonomic scope" value="Bacteria"/>
</dbReference>
<dbReference type="HOGENOM" id="CLU_060739_1_0_10"/>
<dbReference type="OrthoDB" id="9802672at2"/>
<dbReference type="Proteomes" id="UP000008701">
    <property type="component" value="Chromosome"/>
</dbReference>
<dbReference type="GO" id="GO:0003677">
    <property type="term" value="F:DNA binding"/>
    <property type="evidence" value="ECO:0007669"/>
    <property type="project" value="UniProtKB-UniRule"/>
</dbReference>
<dbReference type="GO" id="GO:0008270">
    <property type="term" value="F:zinc ion binding"/>
    <property type="evidence" value="ECO:0007669"/>
    <property type="project" value="UniProtKB-KW"/>
</dbReference>
<dbReference type="GO" id="GO:0006310">
    <property type="term" value="P:DNA recombination"/>
    <property type="evidence" value="ECO:0007669"/>
    <property type="project" value="UniProtKB-UniRule"/>
</dbReference>
<dbReference type="GO" id="GO:0006281">
    <property type="term" value="P:DNA repair"/>
    <property type="evidence" value="ECO:0007669"/>
    <property type="project" value="UniProtKB-UniRule"/>
</dbReference>
<dbReference type="CDD" id="cd01025">
    <property type="entry name" value="TOPRIM_recR"/>
    <property type="match status" value="1"/>
</dbReference>
<dbReference type="Gene3D" id="3.40.1360.10">
    <property type="match status" value="1"/>
</dbReference>
<dbReference type="Gene3D" id="6.10.250.240">
    <property type="match status" value="1"/>
</dbReference>
<dbReference type="Gene3D" id="1.10.8.420">
    <property type="entry name" value="RecR Domain 1"/>
    <property type="match status" value="1"/>
</dbReference>
<dbReference type="HAMAP" id="MF_00017">
    <property type="entry name" value="RecR"/>
    <property type="match status" value="1"/>
</dbReference>
<dbReference type="InterPro" id="IPR000093">
    <property type="entry name" value="DNA_Rcmb_RecR"/>
</dbReference>
<dbReference type="InterPro" id="IPR023627">
    <property type="entry name" value="Rcmb_RecR"/>
</dbReference>
<dbReference type="InterPro" id="IPR006171">
    <property type="entry name" value="TOPRIM_dom"/>
</dbReference>
<dbReference type="InterPro" id="IPR034137">
    <property type="entry name" value="TOPRIM_RecR"/>
</dbReference>
<dbReference type="NCBIfam" id="TIGR00615">
    <property type="entry name" value="recR"/>
    <property type="match status" value="1"/>
</dbReference>
<dbReference type="PANTHER" id="PTHR30446">
    <property type="entry name" value="RECOMBINATION PROTEIN RECR"/>
    <property type="match status" value="1"/>
</dbReference>
<dbReference type="PANTHER" id="PTHR30446:SF0">
    <property type="entry name" value="RECOMBINATION PROTEIN RECR"/>
    <property type="match status" value="1"/>
</dbReference>
<dbReference type="Pfam" id="PF21175">
    <property type="entry name" value="RecR_C"/>
    <property type="match status" value="1"/>
</dbReference>
<dbReference type="Pfam" id="PF21176">
    <property type="entry name" value="RecR_HhH"/>
    <property type="match status" value="1"/>
</dbReference>
<dbReference type="Pfam" id="PF13662">
    <property type="entry name" value="Toprim_4"/>
    <property type="match status" value="1"/>
</dbReference>
<dbReference type="SMART" id="SM00493">
    <property type="entry name" value="TOPRIM"/>
    <property type="match status" value="1"/>
</dbReference>
<dbReference type="SUPFAM" id="SSF111304">
    <property type="entry name" value="Recombination protein RecR"/>
    <property type="match status" value="1"/>
</dbReference>
<dbReference type="PROSITE" id="PS50880">
    <property type="entry name" value="TOPRIM"/>
    <property type="match status" value="1"/>
</dbReference>
<proteinExistence type="inferred from homology"/>
<name>RECR_CHLPD</name>
<gene>
    <name evidence="1" type="primary">recR</name>
    <name type="ordered locus">Cpha266_1172</name>
</gene>
<evidence type="ECO:0000255" key="1">
    <source>
        <dbReference type="HAMAP-Rule" id="MF_00017"/>
    </source>
</evidence>
<reference key="1">
    <citation type="submission" date="2006-12" db="EMBL/GenBank/DDBJ databases">
        <title>Complete sequence of Chlorobium phaeobacteroides DSM 266.</title>
        <authorList>
            <consortium name="US DOE Joint Genome Institute"/>
            <person name="Copeland A."/>
            <person name="Lucas S."/>
            <person name="Lapidus A."/>
            <person name="Barry K."/>
            <person name="Detter J.C."/>
            <person name="Glavina del Rio T."/>
            <person name="Hammon N."/>
            <person name="Israni S."/>
            <person name="Pitluck S."/>
            <person name="Goltsman E."/>
            <person name="Schmutz J."/>
            <person name="Larimer F."/>
            <person name="Land M."/>
            <person name="Hauser L."/>
            <person name="Mikhailova N."/>
            <person name="Li T."/>
            <person name="Overmann J."/>
            <person name="Bryant D.A."/>
            <person name="Richardson P."/>
        </authorList>
    </citation>
    <scope>NUCLEOTIDE SEQUENCE [LARGE SCALE GENOMIC DNA]</scope>
    <source>
        <strain>DSM 266 / SMG 266 / 2430</strain>
    </source>
</reference>
<feature type="chain" id="PRO_1000001523" description="Recombination protein RecR">
    <location>
        <begin position="1"/>
        <end position="205"/>
    </location>
</feature>
<feature type="domain" description="Toprim" evidence="1">
    <location>
        <begin position="83"/>
        <end position="182"/>
    </location>
</feature>
<feature type="zinc finger region" description="C4-type" evidence="1">
    <location>
        <begin position="58"/>
        <end position="75"/>
    </location>
</feature>
<organism>
    <name type="scientific">Chlorobium phaeobacteroides (strain DSM 266 / SMG 266 / 2430)</name>
    <dbReference type="NCBI Taxonomy" id="290317"/>
    <lineage>
        <taxon>Bacteria</taxon>
        <taxon>Pseudomonadati</taxon>
        <taxon>Chlorobiota</taxon>
        <taxon>Chlorobiia</taxon>
        <taxon>Chlorobiales</taxon>
        <taxon>Chlorobiaceae</taxon>
        <taxon>Chlorobium/Pelodictyon group</taxon>
        <taxon>Chlorobium</taxon>
    </lineage>
</organism>
<keyword id="KW-0227">DNA damage</keyword>
<keyword id="KW-0233">DNA recombination</keyword>
<keyword id="KW-0234">DNA repair</keyword>
<keyword id="KW-0479">Metal-binding</keyword>
<keyword id="KW-1185">Reference proteome</keyword>
<keyword id="KW-0862">Zinc</keyword>
<keyword id="KW-0863">Zinc-finger</keyword>
<protein>
    <recommendedName>
        <fullName evidence="1">Recombination protein RecR</fullName>
    </recommendedName>
</protein>
<sequence length="205" mass="22569">MRYTSGAIETLIDEFARLPGIGRKTAQRLCMHMLNEPRTAAEKLAKALLDVKDRVIRCSECQNVTDRDSDPCVLCRSSGRDRTVICVVESPVDLLAFEKTGHYKGLYHVLHGVISPLDGIGPDDIKVRELLARVSRPEESLQVREVVLALNPTVEGETTSLYISRLLKPLGIAVSKIARGIPVGAELEFIDEATLSRAMEGRSAM</sequence>
<comment type="function">
    <text evidence="1">May play a role in DNA repair. It seems to be involved in an RecBC-independent recombinational process of DNA repair. It may act with RecF and RecO.</text>
</comment>
<comment type="similarity">
    <text evidence="1">Belongs to the RecR family.</text>
</comment>